<keyword id="KW-0687">Ribonucleoprotein</keyword>
<keyword id="KW-0689">Ribosomal protein</keyword>
<keyword id="KW-0694">RNA-binding</keyword>
<keyword id="KW-0699">rRNA-binding</keyword>
<feature type="chain" id="PRO_1000126986" description="Large ribosomal subunit protein bL9">
    <location>
        <begin position="1"/>
        <end position="147"/>
    </location>
</feature>
<accession>B0K5L4</accession>
<sequence>MKVILVKDVKNVGKAGEIVNVSDGYGRNYLLPRGLAIEATESNVKALNEKKKAEEKKRQQELEEAKEMAQKLSNLSLVLKVKAGENGKLFGSVTSKDVEEALKEKGFDIDKKKIVFNENVKTTGTYYVDIKLYQGVTAKVKVDVVAE</sequence>
<reference key="1">
    <citation type="submission" date="2008-01" db="EMBL/GenBank/DDBJ databases">
        <title>Complete sequence of Thermoanaerobacter sp. X514.</title>
        <authorList>
            <consortium name="US DOE Joint Genome Institute"/>
            <person name="Copeland A."/>
            <person name="Lucas S."/>
            <person name="Lapidus A."/>
            <person name="Barry K."/>
            <person name="Glavina del Rio T."/>
            <person name="Dalin E."/>
            <person name="Tice H."/>
            <person name="Pitluck S."/>
            <person name="Bruce D."/>
            <person name="Goodwin L."/>
            <person name="Saunders E."/>
            <person name="Brettin T."/>
            <person name="Detter J.C."/>
            <person name="Han C."/>
            <person name="Schmutz J."/>
            <person name="Larimer F."/>
            <person name="Land M."/>
            <person name="Hauser L."/>
            <person name="Kyrpides N."/>
            <person name="Kim E."/>
            <person name="Hemme C."/>
            <person name="Fields M.W."/>
            <person name="He Z."/>
            <person name="Zhou J."/>
            <person name="Richardson P."/>
        </authorList>
    </citation>
    <scope>NUCLEOTIDE SEQUENCE [LARGE SCALE GENOMIC DNA]</scope>
    <source>
        <strain>X514</strain>
    </source>
</reference>
<organism>
    <name type="scientific">Thermoanaerobacter sp. (strain X514)</name>
    <dbReference type="NCBI Taxonomy" id="399726"/>
    <lineage>
        <taxon>Bacteria</taxon>
        <taxon>Bacillati</taxon>
        <taxon>Bacillota</taxon>
        <taxon>Clostridia</taxon>
        <taxon>Thermoanaerobacterales</taxon>
        <taxon>Thermoanaerobacteraceae</taxon>
        <taxon>Thermoanaerobacter</taxon>
    </lineage>
</organism>
<evidence type="ECO:0000255" key="1">
    <source>
        <dbReference type="HAMAP-Rule" id="MF_00503"/>
    </source>
</evidence>
<evidence type="ECO:0000305" key="2"/>
<protein>
    <recommendedName>
        <fullName evidence="1">Large ribosomal subunit protein bL9</fullName>
    </recommendedName>
    <alternativeName>
        <fullName evidence="2">50S ribosomal protein L9</fullName>
    </alternativeName>
</protein>
<name>RL9_THEPX</name>
<comment type="function">
    <text evidence="1">Binds to the 23S rRNA.</text>
</comment>
<comment type="similarity">
    <text evidence="1">Belongs to the bacterial ribosomal protein bL9 family.</text>
</comment>
<proteinExistence type="inferred from homology"/>
<gene>
    <name evidence="1" type="primary">rplI</name>
    <name type="ordered locus">Teth514_2388</name>
</gene>
<dbReference type="EMBL" id="CP000923">
    <property type="protein sequence ID" value="ABY93648.1"/>
    <property type="molecule type" value="Genomic_DNA"/>
</dbReference>
<dbReference type="RefSeq" id="WP_003867437.1">
    <property type="nucleotide sequence ID" value="NC_010320.1"/>
</dbReference>
<dbReference type="SMR" id="B0K5L4"/>
<dbReference type="KEGG" id="tex:Teth514_2388"/>
<dbReference type="HOGENOM" id="CLU_078938_3_0_9"/>
<dbReference type="Proteomes" id="UP000002155">
    <property type="component" value="Chromosome"/>
</dbReference>
<dbReference type="GO" id="GO:1990904">
    <property type="term" value="C:ribonucleoprotein complex"/>
    <property type="evidence" value="ECO:0007669"/>
    <property type="project" value="UniProtKB-KW"/>
</dbReference>
<dbReference type="GO" id="GO:0005840">
    <property type="term" value="C:ribosome"/>
    <property type="evidence" value="ECO:0007669"/>
    <property type="project" value="UniProtKB-KW"/>
</dbReference>
<dbReference type="GO" id="GO:0019843">
    <property type="term" value="F:rRNA binding"/>
    <property type="evidence" value="ECO:0007669"/>
    <property type="project" value="UniProtKB-UniRule"/>
</dbReference>
<dbReference type="GO" id="GO:0003735">
    <property type="term" value="F:structural constituent of ribosome"/>
    <property type="evidence" value="ECO:0007669"/>
    <property type="project" value="InterPro"/>
</dbReference>
<dbReference type="GO" id="GO:0006412">
    <property type="term" value="P:translation"/>
    <property type="evidence" value="ECO:0007669"/>
    <property type="project" value="UniProtKB-UniRule"/>
</dbReference>
<dbReference type="FunFam" id="3.40.5.10:FF:000002">
    <property type="entry name" value="50S ribosomal protein L9"/>
    <property type="match status" value="1"/>
</dbReference>
<dbReference type="Gene3D" id="3.10.430.100">
    <property type="entry name" value="Ribosomal protein L9, C-terminal domain"/>
    <property type="match status" value="1"/>
</dbReference>
<dbReference type="Gene3D" id="3.40.5.10">
    <property type="entry name" value="Ribosomal protein L9, N-terminal domain"/>
    <property type="match status" value="1"/>
</dbReference>
<dbReference type="HAMAP" id="MF_00503">
    <property type="entry name" value="Ribosomal_bL9"/>
    <property type="match status" value="1"/>
</dbReference>
<dbReference type="InterPro" id="IPR000244">
    <property type="entry name" value="Ribosomal_bL9"/>
</dbReference>
<dbReference type="InterPro" id="IPR009027">
    <property type="entry name" value="Ribosomal_bL9/RNase_H1_N"/>
</dbReference>
<dbReference type="InterPro" id="IPR020594">
    <property type="entry name" value="Ribosomal_bL9_bac/chp"/>
</dbReference>
<dbReference type="InterPro" id="IPR020069">
    <property type="entry name" value="Ribosomal_bL9_C"/>
</dbReference>
<dbReference type="InterPro" id="IPR036791">
    <property type="entry name" value="Ribosomal_bL9_C_sf"/>
</dbReference>
<dbReference type="InterPro" id="IPR020070">
    <property type="entry name" value="Ribosomal_bL9_N"/>
</dbReference>
<dbReference type="InterPro" id="IPR036935">
    <property type="entry name" value="Ribosomal_bL9_N_sf"/>
</dbReference>
<dbReference type="NCBIfam" id="TIGR00158">
    <property type="entry name" value="L9"/>
    <property type="match status" value="1"/>
</dbReference>
<dbReference type="PANTHER" id="PTHR21368">
    <property type="entry name" value="50S RIBOSOMAL PROTEIN L9"/>
    <property type="match status" value="1"/>
</dbReference>
<dbReference type="Pfam" id="PF03948">
    <property type="entry name" value="Ribosomal_L9_C"/>
    <property type="match status" value="1"/>
</dbReference>
<dbReference type="Pfam" id="PF01281">
    <property type="entry name" value="Ribosomal_L9_N"/>
    <property type="match status" value="1"/>
</dbReference>
<dbReference type="SUPFAM" id="SSF55658">
    <property type="entry name" value="L9 N-domain-like"/>
    <property type="match status" value="1"/>
</dbReference>
<dbReference type="SUPFAM" id="SSF55653">
    <property type="entry name" value="Ribosomal protein L9 C-domain"/>
    <property type="match status" value="1"/>
</dbReference>
<dbReference type="PROSITE" id="PS00651">
    <property type="entry name" value="RIBOSOMAL_L9"/>
    <property type="match status" value="1"/>
</dbReference>